<reference key="1">
    <citation type="journal article" date="2003" name="Nature">
        <title>The genome of a motile marine Synechococcus.</title>
        <authorList>
            <person name="Palenik B."/>
            <person name="Brahamsha B."/>
            <person name="Larimer F.W."/>
            <person name="Land M.L."/>
            <person name="Hauser L."/>
            <person name="Chain P."/>
            <person name="Lamerdin J.E."/>
            <person name="Regala W."/>
            <person name="Allen E.E."/>
            <person name="McCarren J."/>
            <person name="Paulsen I.T."/>
            <person name="Dufresne A."/>
            <person name="Partensky F."/>
            <person name="Webb E.A."/>
            <person name="Waterbury J."/>
        </authorList>
    </citation>
    <scope>NUCLEOTIDE SEQUENCE [LARGE SCALE GENOMIC DNA]</scope>
    <source>
        <strain>WH8102</strain>
    </source>
</reference>
<sequence>MAAAASSSSAASAPRSGEDIREAFLNFYAERGHQRMASASLIPEDPTVLLTIAGMLPFKPVFLGQQQRPAPRATSSQKCIRTNDIENVGRTARHHTFFEMLGNFSFGDYFKQQAIEWAWELSTQVYGIDPRNLVVSVFREDDEAEQIWRDVVGVNTKRIIRMDEADNFWASGPTGPCGPCSEIYYDFKPELGDDGIDLEDDDRFIEFYNLVFMQYNRDAEGNLTPLANRNIDTGMGLERMAQILQKVPNNYETDLIFPLIQAAADLACVDYAQLDDKGKTSLKVIGDHSRAVTQLICDGVTASNLGRGYILRRLLRRVVRHGRLLGIDKPFLVTMGEAAIDLLKGAHPGVIERQEVILAELQREEARFLETLERGEKLLAEVLASRPTQISGAQAFELYDTYGFPLELTQEIAEEQRITVDLDGFEVAMEEQRQRAKAAAVSIDLTLQDAIEQVAGDQPATAFKGYDALDHPSTVQALVVNGAPASTASAGDVVQVVLDSTPFYGEGGGQVGDRGSLSGVDVIVAIDSVSRSRDVFVHSGRMERGHLAVGDTVNAQVDRSCRRRAQANHTATHLLQAALKQVVDPGIGQAGSLVDFDRLRFDFHCPTAVTAEQLAQIETLINGWIAEAHCLEVQEMAIDQAKAAGAVAMFGEKYADVVRVVDVPGVSMELCGGTHVANTAEIGLFKIVAESGVAAGIRRIEAVAGPAVLAYLNERDAVVKQLGDRFKAQPAEIVDRVTALQEELKATGKALAAAQAELAVAKAGALAAKAEAVGEFQLLVERLDGVEGAGLQGAAQSLADQLGDGAAVVIGGLPDPGDLGKVILVAAFGKQVIAAKLQAGKFIGGIAKQCGGGGGGRPNLAQAGGRDGAALPGALAAARSELAAALPQS</sequence>
<name>SYA_PARMW</name>
<proteinExistence type="inferred from homology"/>
<accession>Q7U3R9</accession>
<gene>
    <name evidence="1" type="primary">alaS</name>
    <name type="ordered locus">SYNW2360</name>
</gene>
<comment type="function">
    <text evidence="1">Catalyzes the attachment of alanine to tRNA(Ala) in a two-step reaction: alanine is first activated by ATP to form Ala-AMP and then transferred to the acceptor end of tRNA(Ala). Also edits incorrectly charged Ser-tRNA(Ala) and Gly-tRNA(Ala) via its editing domain.</text>
</comment>
<comment type="catalytic activity">
    <reaction evidence="1">
        <text>tRNA(Ala) + L-alanine + ATP = L-alanyl-tRNA(Ala) + AMP + diphosphate</text>
        <dbReference type="Rhea" id="RHEA:12540"/>
        <dbReference type="Rhea" id="RHEA-COMP:9657"/>
        <dbReference type="Rhea" id="RHEA-COMP:9923"/>
        <dbReference type="ChEBI" id="CHEBI:30616"/>
        <dbReference type="ChEBI" id="CHEBI:33019"/>
        <dbReference type="ChEBI" id="CHEBI:57972"/>
        <dbReference type="ChEBI" id="CHEBI:78442"/>
        <dbReference type="ChEBI" id="CHEBI:78497"/>
        <dbReference type="ChEBI" id="CHEBI:456215"/>
        <dbReference type="EC" id="6.1.1.7"/>
    </reaction>
</comment>
<comment type="cofactor">
    <cofactor evidence="1">
        <name>Zn(2+)</name>
        <dbReference type="ChEBI" id="CHEBI:29105"/>
    </cofactor>
    <text evidence="1">Binds 1 zinc ion per subunit.</text>
</comment>
<comment type="subcellular location">
    <subcellularLocation>
        <location evidence="1">Cytoplasm</location>
    </subcellularLocation>
</comment>
<comment type="domain">
    <text evidence="1">Consists of three domains; the N-terminal catalytic domain, the editing domain and the C-terminal C-Ala domain. The editing domain removes incorrectly charged amino acids, while the C-Ala domain, along with tRNA(Ala), serves as a bridge to cooperatively bring together the editing and aminoacylation centers thus stimulating deacylation of misacylated tRNAs.</text>
</comment>
<comment type="similarity">
    <text evidence="1">Belongs to the class-II aminoacyl-tRNA synthetase family.</text>
</comment>
<feature type="chain" id="PRO_0000075228" description="Alanine--tRNA ligase">
    <location>
        <begin position="1"/>
        <end position="889"/>
    </location>
</feature>
<feature type="binding site" evidence="1">
    <location>
        <position position="569"/>
    </location>
    <ligand>
        <name>Zn(2+)</name>
        <dbReference type="ChEBI" id="CHEBI:29105"/>
    </ligand>
</feature>
<feature type="binding site" evidence="1">
    <location>
        <position position="573"/>
    </location>
    <ligand>
        <name>Zn(2+)</name>
        <dbReference type="ChEBI" id="CHEBI:29105"/>
    </ligand>
</feature>
<feature type="binding site" evidence="1">
    <location>
        <position position="671"/>
    </location>
    <ligand>
        <name>Zn(2+)</name>
        <dbReference type="ChEBI" id="CHEBI:29105"/>
    </ligand>
</feature>
<feature type="binding site" evidence="1">
    <location>
        <position position="675"/>
    </location>
    <ligand>
        <name>Zn(2+)</name>
        <dbReference type="ChEBI" id="CHEBI:29105"/>
    </ligand>
</feature>
<protein>
    <recommendedName>
        <fullName evidence="1">Alanine--tRNA ligase</fullName>
        <ecNumber evidence="1">6.1.1.7</ecNumber>
    </recommendedName>
    <alternativeName>
        <fullName evidence="1">Alanyl-tRNA synthetase</fullName>
        <shortName evidence="1">AlaRS</shortName>
    </alternativeName>
</protein>
<organism>
    <name type="scientific">Parasynechococcus marenigrum (strain WH8102)</name>
    <dbReference type="NCBI Taxonomy" id="84588"/>
    <lineage>
        <taxon>Bacteria</taxon>
        <taxon>Bacillati</taxon>
        <taxon>Cyanobacteriota</taxon>
        <taxon>Cyanophyceae</taxon>
        <taxon>Synechococcales</taxon>
        <taxon>Prochlorococcaceae</taxon>
        <taxon>Parasynechococcus</taxon>
        <taxon>Parasynechococcus marenigrum</taxon>
    </lineage>
</organism>
<dbReference type="EC" id="6.1.1.7" evidence="1"/>
<dbReference type="EMBL" id="BX569695">
    <property type="protein sequence ID" value="CAE08875.1"/>
    <property type="molecule type" value="Genomic_DNA"/>
</dbReference>
<dbReference type="RefSeq" id="WP_011129213.1">
    <property type="nucleotide sequence ID" value="NC_005070.1"/>
</dbReference>
<dbReference type="SMR" id="Q7U3R9"/>
<dbReference type="STRING" id="84588.SYNW2360"/>
<dbReference type="KEGG" id="syw:SYNW2360"/>
<dbReference type="eggNOG" id="COG0013">
    <property type="taxonomic scope" value="Bacteria"/>
</dbReference>
<dbReference type="HOGENOM" id="CLU_004485_1_1_3"/>
<dbReference type="Proteomes" id="UP000001422">
    <property type="component" value="Chromosome"/>
</dbReference>
<dbReference type="GO" id="GO:0005829">
    <property type="term" value="C:cytosol"/>
    <property type="evidence" value="ECO:0007669"/>
    <property type="project" value="TreeGrafter"/>
</dbReference>
<dbReference type="GO" id="GO:0004813">
    <property type="term" value="F:alanine-tRNA ligase activity"/>
    <property type="evidence" value="ECO:0007669"/>
    <property type="project" value="UniProtKB-UniRule"/>
</dbReference>
<dbReference type="GO" id="GO:0002161">
    <property type="term" value="F:aminoacyl-tRNA deacylase activity"/>
    <property type="evidence" value="ECO:0007669"/>
    <property type="project" value="TreeGrafter"/>
</dbReference>
<dbReference type="GO" id="GO:0005524">
    <property type="term" value="F:ATP binding"/>
    <property type="evidence" value="ECO:0007669"/>
    <property type="project" value="UniProtKB-UniRule"/>
</dbReference>
<dbReference type="GO" id="GO:0000049">
    <property type="term" value="F:tRNA binding"/>
    <property type="evidence" value="ECO:0007669"/>
    <property type="project" value="UniProtKB-KW"/>
</dbReference>
<dbReference type="GO" id="GO:0008270">
    <property type="term" value="F:zinc ion binding"/>
    <property type="evidence" value="ECO:0007669"/>
    <property type="project" value="UniProtKB-UniRule"/>
</dbReference>
<dbReference type="GO" id="GO:0006419">
    <property type="term" value="P:alanyl-tRNA aminoacylation"/>
    <property type="evidence" value="ECO:0007669"/>
    <property type="project" value="UniProtKB-UniRule"/>
</dbReference>
<dbReference type="CDD" id="cd00673">
    <property type="entry name" value="AlaRS_core"/>
    <property type="match status" value="1"/>
</dbReference>
<dbReference type="FunFam" id="2.40.30.130:FF:000001">
    <property type="entry name" value="Alanine--tRNA ligase"/>
    <property type="match status" value="1"/>
</dbReference>
<dbReference type="FunFam" id="3.10.310.40:FF:000001">
    <property type="entry name" value="Alanine--tRNA ligase"/>
    <property type="match status" value="1"/>
</dbReference>
<dbReference type="FunFam" id="3.30.54.20:FF:000001">
    <property type="entry name" value="Alanine--tRNA ligase"/>
    <property type="match status" value="1"/>
</dbReference>
<dbReference type="FunFam" id="3.30.930.10:FF:000004">
    <property type="entry name" value="Alanine--tRNA ligase"/>
    <property type="match status" value="1"/>
</dbReference>
<dbReference type="FunFam" id="3.30.980.10:FF:000004">
    <property type="entry name" value="Alanine--tRNA ligase, cytoplasmic"/>
    <property type="match status" value="1"/>
</dbReference>
<dbReference type="Gene3D" id="2.40.30.130">
    <property type="match status" value="1"/>
</dbReference>
<dbReference type="Gene3D" id="3.10.310.40">
    <property type="match status" value="1"/>
</dbReference>
<dbReference type="Gene3D" id="3.30.54.20">
    <property type="match status" value="1"/>
</dbReference>
<dbReference type="Gene3D" id="6.10.250.550">
    <property type="match status" value="1"/>
</dbReference>
<dbReference type="Gene3D" id="3.30.930.10">
    <property type="entry name" value="Bira Bifunctional Protein, Domain 2"/>
    <property type="match status" value="1"/>
</dbReference>
<dbReference type="Gene3D" id="3.30.980.10">
    <property type="entry name" value="Threonyl-trna Synthetase, Chain A, domain 2"/>
    <property type="match status" value="1"/>
</dbReference>
<dbReference type="HAMAP" id="MF_00036_B">
    <property type="entry name" value="Ala_tRNA_synth_B"/>
    <property type="match status" value="1"/>
</dbReference>
<dbReference type="InterPro" id="IPR045864">
    <property type="entry name" value="aa-tRNA-synth_II/BPL/LPL"/>
</dbReference>
<dbReference type="InterPro" id="IPR002318">
    <property type="entry name" value="Ala-tRNA-lgiase_IIc"/>
</dbReference>
<dbReference type="InterPro" id="IPR018162">
    <property type="entry name" value="Ala-tRNA-ligase_IIc_anticod-bd"/>
</dbReference>
<dbReference type="InterPro" id="IPR018165">
    <property type="entry name" value="Ala-tRNA-synth_IIc_core"/>
</dbReference>
<dbReference type="InterPro" id="IPR018164">
    <property type="entry name" value="Ala-tRNA-synth_IIc_N"/>
</dbReference>
<dbReference type="InterPro" id="IPR050058">
    <property type="entry name" value="Ala-tRNA_ligase"/>
</dbReference>
<dbReference type="InterPro" id="IPR023033">
    <property type="entry name" value="Ala_tRNA_ligase_euk/bac"/>
</dbReference>
<dbReference type="InterPro" id="IPR003156">
    <property type="entry name" value="DHHA1_dom"/>
</dbReference>
<dbReference type="InterPro" id="IPR018163">
    <property type="entry name" value="Thr/Ala-tRNA-synth_IIc_edit"/>
</dbReference>
<dbReference type="InterPro" id="IPR009000">
    <property type="entry name" value="Transl_B-barrel_sf"/>
</dbReference>
<dbReference type="InterPro" id="IPR012947">
    <property type="entry name" value="tRNA_SAD"/>
</dbReference>
<dbReference type="NCBIfam" id="TIGR00344">
    <property type="entry name" value="alaS"/>
    <property type="match status" value="1"/>
</dbReference>
<dbReference type="PANTHER" id="PTHR11777:SF9">
    <property type="entry name" value="ALANINE--TRNA LIGASE, CYTOPLASMIC"/>
    <property type="match status" value="1"/>
</dbReference>
<dbReference type="PANTHER" id="PTHR11777">
    <property type="entry name" value="ALANYL-TRNA SYNTHETASE"/>
    <property type="match status" value="1"/>
</dbReference>
<dbReference type="Pfam" id="PF02272">
    <property type="entry name" value="DHHA1"/>
    <property type="match status" value="1"/>
</dbReference>
<dbReference type="Pfam" id="PF01411">
    <property type="entry name" value="tRNA-synt_2c"/>
    <property type="match status" value="1"/>
</dbReference>
<dbReference type="Pfam" id="PF07973">
    <property type="entry name" value="tRNA_SAD"/>
    <property type="match status" value="1"/>
</dbReference>
<dbReference type="PRINTS" id="PR00980">
    <property type="entry name" value="TRNASYNTHALA"/>
</dbReference>
<dbReference type="SMART" id="SM00863">
    <property type="entry name" value="tRNA_SAD"/>
    <property type="match status" value="1"/>
</dbReference>
<dbReference type="SUPFAM" id="SSF55681">
    <property type="entry name" value="Class II aaRS and biotin synthetases"/>
    <property type="match status" value="1"/>
</dbReference>
<dbReference type="SUPFAM" id="SSF101353">
    <property type="entry name" value="Putative anticodon-binding domain of alanyl-tRNA synthetase (AlaRS)"/>
    <property type="match status" value="1"/>
</dbReference>
<dbReference type="SUPFAM" id="SSF55186">
    <property type="entry name" value="ThrRS/AlaRS common domain"/>
    <property type="match status" value="1"/>
</dbReference>
<dbReference type="SUPFAM" id="SSF50447">
    <property type="entry name" value="Translation proteins"/>
    <property type="match status" value="1"/>
</dbReference>
<dbReference type="PROSITE" id="PS50860">
    <property type="entry name" value="AA_TRNA_LIGASE_II_ALA"/>
    <property type="match status" value="1"/>
</dbReference>
<evidence type="ECO:0000255" key="1">
    <source>
        <dbReference type="HAMAP-Rule" id="MF_00036"/>
    </source>
</evidence>
<keyword id="KW-0030">Aminoacyl-tRNA synthetase</keyword>
<keyword id="KW-0067">ATP-binding</keyword>
<keyword id="KW-0963">Cytoplasm</keyword>
<keyword id="KW-0436">Ligase</keyword>
<keyword id="KW-0479">Metal-binding</keyword>
<keyword id="KW-0547">Nucleotide-binding</keyword>
<keyword id="KW-0648">Protein biosynthesis</keyword>
<keyword id="KW-0694">RNA-binding</keyword>
<keyword id="KW-0820">tRNA-binding</keyword>
<keyword id="KW-0862">Zinc</keyword>